<comment type="subunit">
    <text evidence="1">Component of the mitochondrial ribosome large subunit (39S) which comprises a 16S rRNA and about 50 distinct proteins.</text>
</comment>
<comment type="subcellular location">
    <subcellularLocation>
        <location evidence="3">Mitochondrion</location>
    </subcellularLocation>
</comment>
<comment type="similarity">
    <text evidence="4">Belongs to the universal ribosomal protein uL10 family.</text>
</comment>
<name>RM10_RAT</name>
<gene>
    <name type="primary">Mrpl10</name>
</gene>
<feature type="transit peptide" description="Mitochondrion" evidence="3">
    <location>
        <begin position="1"/>
        <end position="29"/>
    </location>
</feature>
<feature type="chain" id="PRO_0000273077" description="Large ribosomal subunit protein uL10m">
    <location>
        <begin position="30"/>
        <end position="263"/>
    </location>
</feature>
<feature type="region of interest" description="Disordered" evidence="2">
    <location>
        <begin position="241"/>
        <end position="263"/>
    </location>
</feature>
<organism>
    <name type="scientific">Rattus norvegicus</name>
    <name type="common">Rat</name>
    <dbReference type="NCBI Taxonomy" id="10116"/>
    <lineage>
        <taxon>Eukaryota</taxon>
        <taxon>Metazoa</taxon>
        <taxon>Chordata</taxon>
        <taxon>Craniata</taxon>
        <taxon>Vertebrata</taxon>
        <taxon>Euteleostomi</taxon>
        <taxon>Mammalia</taxon>
        <taxon>Eutheria</taxon>
        <taxon>Euarchontoglires</taxon>
        <taxon>Glires</taxon>
        <taxon>Rodentia</taxon>
        <taxon>Myomorpha</taxon>
        <taxon>Muroidea</taxon>
        <taxon>Muridae</taxon>
        <taxon>Murinae</taxon>
        <taxon>Rattus</taxon>
    </lineage>
</organism>
<reference key="1">
    <citation type="journal article" date="2004" name="Nature">
        <title>Genome sequence of the Brown Norway rat yields insights into mammalian evolution.</title>
        <authorList>
            <person name="Gibbs R.A."/>
            <person name="Weinstock G.M."/>
            <person name="Metzker M.L."/>
            <person name="Muzny D.M."/>
            <person name="Sodergren E.J."/>
            <person name="Scherer S."/>
            <person name="Scott G."/>
            <person name="Steffen D."/>
            <person name="Worley K.C."/>
            <person name="Burch P.E."/>
            <person name="Okwuonu G."/>
            <person name="Hines S."/>
            <person name="Lewis L."/>
            <person name="Deramo C."/>
            <person name="Delgado O."/>
            <person name="Dugan-Rocha S."/>
            <person name="Miner G."/>
            <person name="Morgan M."/>
            <person name="Hawes A."/>
            <person name="Gill R."/>
            <person name="Holt R.A."/>
            <person name="Adams M.D."/>
            <person name="Amanatides P.G."/>
            <person name="Baden-Tillson H."/>
            <person name="Barnstead M."/>
            <person name="Chin S."/>
            <person name="Evans C.A."/>
            <person name="Ferriera S."/>
            <person name="Fosler C."/>
            <person name="Glodek A."/>
            <person name="Gu Z."/>
            <person name="Jennings D."/>
            <person name="Kraft C.L."/>
            <person name="Nguyen T."/>
            <person name="Pfannkoch C.M."/>
            <person name="Sitter C."/>
            <person name="Sutton G.G."/>
            <person name="Venter J.C."/>
            <person name="Woodage T."/>
            <person name="Smith D."/>
            <person name="Lee H.-M."/>
            <person name="Gustafson E."/>
            <person name="Cahill P."/>
            <person name="Kana A."/>
            <person name="Doucette-Stamm L."/>
            <person name="Weinstock K."/>
            <person name="Fechtel K."/>
            <person name="Weiss R.B."/>
            <person name="Dunn D.M."/>
            <person name="Green E.D."/>
            <person name="Blakesley R.W."/>
            <person name="Bouffard G.G."/>
            <person name="De Jong P.J."/>
            <person name="Osoegawa K."/>
            <person name="Zhu B."/>
            <person name="Marra M."/>
            <person name="Schein J."/>
            <person name="Bosdet I."/>
            <person name="Fjell C."/>
            <person name="Jones S."/>
            <person name="Krzywinski M."/>
            <person name="Mathewson C."/>
            <person name="Siddiqui A."/>
            <person name="Wye N."/>
            <person name="McPherson J."/>
            <person name="Zhao S."/>
            <person name="Fraser C.M."/>
            <person name="Shetty J."/>
            <person name="Shatsman S."/>
            <person name="Geer K."/>
            <person name="Chen Y."/>
            <person name="Abramzon S."/>
            <person name="Nierman W.C."/>
            <person name="Havlak P.H."/>
            <person name="Chen R."/>
            <person name="Durbin K.J."/>
            <person name="Egan A."/>
            <person name="Ren Y."/>
            <person name="Song X.-Z."/>
            <person name="Li B."/>
            <person name="Liu Y."/>
            <person name="Qin X."/>
            <person name="Cawley S."/>
            <person name="Cooney A.J."/>
            <person name="D'Souza L.M."/>
            <person name="Martin K."/>
            <person name="Wu J.Q."/>
            <person name="Gonzalez-Garay M.L."/>
            <person name="Jackson A.R."/>
            <person name="Kalafus K.J."/>
            <person name="McLeod M.P."/>
            <person name="Milosavljevic A."/>
            <person name="Virk D."/>
            <person name="Volkov A."/>
            <person name="Wheeler D.A."/>
            <person name="Zhang Z."/>
            <person name="Bailey J.A."/>
            <person name="Eichler E.E."/>
            <person name="Tuzun E."/>
            <person name="Birney E."/>
            <person name="Mongin E."/>
            <person name="Ureta-Vidal A."/>
            <person name="Woodwark C."/>
            <person name="Zdobnov E."/>
            <person name="Bork P."/>
            <person name="Suyama M."/>
            <person name="Torrents D."/>
            <person name="Alexandersson M."/>
            <person name="Trask B.J."/>
            <person name="Young J.M."/>
            <person name="Huang H."/>
            <person name="Wang H."/>
            <person name="Xing H."/>
            <person name="Daniels S."/>
            <person name="Gietzen D."/>
            <person name="Schmidt J."/>
            <person name="Stevens K."/>
            <person name="Vitt U."/>
            <person name="Wingrove J."/>
            <person name="Camara F."/>
            <person name="Mar Alba M."/>
            <person name="Abril J.F."/>
            <person name="Guigo R."/>
            <person name="Smit A."/>
            <person name="Dubchak I."/>
            <person name="Rubin E.M."/>
            <person name="Couronne O."/>
            <person name="Poliakov A."/>
            <person name="Huebner N."/>
            <person name="Ganten D."/>
            <person name="Goesele C."/>
            <person name="Hummel O."/>
            <person name="Kreitler T."/>
            <person name="Lee Y.-A."/>
            <person name="Monti J."/>
            <person name="Schulz H."/>
            <person name="Zimdahl H."/>
            <person name="Himmelbauer H."/>
            <person name="Lehrach H."/>
            <person name="Jacob H.J."/>
            <person name="Bromberg S."/>
            <person name="Gullings-Handley J."/>
            <person name="Jensen-Seaman M.I."/>
            <person name="Kwitek A.E."/>
            <person name="Lazar J."/>
            <person name="Pasko D."/>
            <person name="Tonellato P.J."/>
            <person name="Twigger S."/>
            <person name="Ponting C.P."/>
            <person name="Duarte J.M."/>
            <person name="Rice S."/>
            <person name="Goodstadt L."/>
            <person name="Beatson S.A."/>
            <person name="Emes R.D."/>
            <person name="Winter E.E."/>
            <person name="Webber C."/>
            <person name="Brandt P."/>
            <person name="Nyakatura G."/>
            <person name="Adetobi M."/>
            <person name="Chiaromonte F."/>
            <person name="Elnitski L."/>
            <person name="Eswara P."/>
            <person name="Hardison R.C."/>
            <person name="Hou M."/>
            <person name="Kolbe D."/>
            <person name="Makova K."/>
            <person name="Miller W."/>
            <person name="Nekrutenko A."/>
            <person name="Riemer C."/>
            <person name="Schwartz S."/>
            <person name="Taylor J."/>
            <person name="Yang S."/>
            <person name="Zhang Y."/>
            <person name="Lindpaintner K."/>
            <person name="Andrews T.D."/>
            <person name="Caccamo M."/>
            <person name="Clamp M."/>
            <person name="Clarke L."/>
            <person name="Curwen V."/>
            <person name="Durbin R.M."/>
            <person name="Eyras E."/>
            <person name="Searle S.M."/>
            <person name="Cooper G.M."/>
            <person name="Batzoglou S."/>
            <person name="Brudno M."/>
            <person name="Sidow A."/>
            <person name="Stone E.A."/>
            <person name="Payseur B.A."/>
            <person name="Bourque G."/>
            <person name="Lopez-Otin C."/>
            <person name="Puente X.S."/>
            <person name="Chakrabarti K."/>
            <person name="Chatterji S."/>
            <person name="Dewey C."/>
            <person name="Pachter L."/>
            <person name="Bray N."/>
            <person name="Yap V.B."/>
            <person name="Caspi A."/>
            <person name="Tesler G."/>
            <person name="Pevzner P.A."/>
            <person name="Haussler D."/>
            <person name="Roskin K.M."/>
            <person name="Baertsch R."/>
            <person name="Clawson H."/>
            <person name="Furey T.S."/>
            <person name="Hinrichs A.S."/>
            <person name="Karolchik D."/>
            <person name="Kent W.J."/>
            <person name="Rosenbloom K.R."/>
            <person name="Trumbower H."/>
            <person name="Weirauch M."/>
            <person name="Cooper D.N."/>
            <person name="Stenson P.D."/>
            <person name="Ma B."/>
            <person name="Brent M."/>
            <person name="Arumugam M."/>
            <person name="Shteynberg D."/>
            <person name="Copley R.R."/>
            <person name="Taylor M.S."/>
            <person name="Riethman H."/>
            <person name="Mudunuri U."/>
            <person name="Peterson J."/>
            <person name="Guyer M."/>
            <person name="Felsenfeld A."/>
            <person name="Old S."/>
            <person name="Mockrin S."/>
            <person name="Collins F.S."/>
        </authorList>
    </citation>
    <scope>NUCLEOTIDE SEQUENCE [LARGE SCALE GENOMIC DNA]</scope>
    <source>
        <strain>Brown Norway</strain>
    </source>
</reference>
<reference key="2">
    <citation type="journal article" date="1998" name="J. Biol. Chem.">
        <title>Mammalian mitochondrial ribosomal proteins. N-terminal amino acid sequencing, characterization, and identification of corresponding gene sequences.</title>
        <authorList>
            <person name="Goldschmidt-Reisin S."/>
            <person name="Kitakawa M."/>
            <person name="Herfurth E."/>
            <person name="Wittmann-Liebold B."/>
            <person name="Grohmann L."/>
            <person name="Graack H.-R."/>
        </authorList>
    </citation>
    <scope>PROTEIN SEQUENCE OF 30-48</scope>
    <scope>SUBCELLULAR LOCATION</scope>
</reference>
<evidence type="ECO:0000250" key="1">
    <source>
        <dbReference type="UniProtKB" id="Q7Z7H8"/>
    </source>
</evidence>
<evidence type="ECO:0000256" key="2">
    <source>
        <dbReference type="SAM" id="MobiDB-lite"/>
    </source>
</evidence>
<evidence type="ECO:0000269" key="3">
    <source>
    </source>
</evidence>
<evidence type="ECO:0000305" key="4"/>
<sequence length="263" mass="29940">MPFSVEVEVFFLLVEDKLGWLPTLQPVRHGSKAVTRHRRVMHFQRQKLMAITEYIPPRPAVSPRCLPPPPKPPKEESGLIRLLRRDIAAVFRDNRMIAVCQNVALSAEDKLLLRHQLRKHKIFIKVFPSQVLKPFLEDSKYQNLLPLFVGHNLLLVSEEPKVKEMVRILKSVPFLPLLGGCIDDTILSRQGFVEYAKLPSLDRLQGELVGGLTHLTAQTRYLLQHQPVQLTSLLDQYVRQQHEGDCATSTEGKPHPPDPAPDS</sequence>
<dbReference type="EMBL" id="AABR03074063">
    <property type="status" value="NOT_ANNOTATED_CDS"/>
    <property type="molecule type" value="Genomic_DNA"/>
</dbReference>
<dbReference type="SMR" id="P0C2C4"/>
<dbReference type="FunCoup" id="P0C2C4">
    <property type="interactions" value="2528"/>
</dbReference>
<dbReference type="STRING" id="10116.ENSRNOP00000061129"/>
<dbReference type="iPTMnet" id="P0C2C4"/>
<dbReference type="PhosphoSitePlus" id="P0C2C4"/>
<dbReference type="PaxDb" id="10116-ENSRNOP00000061129"/>
<dbReference type="Ensembl" id="ENSRNOT00000065555.4">
    <property type="protein sequence ID" value="ENSRNOP00000061129.1"/>
    <property type="gene ID" value="ENSRNOG00000009567.9"/>
</dbReference>
<dbReference type="UCSC" id="RGD:1588626">
    <property type="organism name" value="rat"/>
</dbReference>
<dbReference type="AGR" id="RGD:1588626"/>
<dbReference type="RGD" id="1588626">
    <property type="gene designation" value="Mrpl10"/>
</dbReference>
<dbReference type="eggNOG" id="KOG4241">
    <property type="taxonomic scope" value="Eukaryota"/>
</dbReference>
<dbReference type="GeneTree" id="ENSGT00390000000603"/>
<dbReference type="InParanoid" id="P0C2C4"/>
<dbReference type="OMA" id="RENRMIA"/>
<dbReference type="OrthoDB" id="360689at2759"/>
<dbReference type="PhylomeDB" id="P0C2C4"/>
<dbReference type="TreeFam" id="TF321349"/>
<dbReference type="Reactome" id="R-RNO-5389840">
    <property type="pathway name" value="Mitochondrial translation elongation"/>
</dbReference>
<dbReference type="Reactome" id="R-RNO-5419276">
    <property type="pathway name" value="Mitochondrial translation termination"/>
</dbReference>
<dbReference type="PRO" id="PR:P0C2C4"/>
<dbReference type="Proteomes" id="UP000002494">
    <property type="component" value="Chromosome 10"/>
</dbReference>
<dbReference type="Bgee" id="ENSRNOG00000009567">
    <property type="expression patterns" value="Expressed in heart and 20 other cell types or tissues"/>
</dbReference>
<dbReference type="ExpressionAtlas" id="P0C2C4">
    <property type="expression patterns" value="baseline and differential"/>
</dbReference>
<dbReference type="GO" id="GO:0005762">
    <property type="term" value="C:mitochondrial large ribosomal subunit"/>
    <property type="evidence" value="ECO:0000250"/>
    <property type="project" value="UniProtKB"/>
</dbReference>
<dbReference type="GO" id="GO:0005739">
    <property type="term" value="C:mitochondrion"/>
    <property type="evidence" value="ECO:0000266"/>
    <property type="project" value="RGD"/>
</dbReference>
<dbReference type="GO" id="GO:0005654">
    <property type="term" value="C:nucleoplasm"/>
    <property type="evidence" value="ECO:0007669"/>
    <property type="project" value="Ensembl"/>
</dbReference>
<dbReference type="GO" id="GO:1990904">
    <property type="term" value="C:ribonucleoprotein complex"/>
    <property type="evidence" value="ECO:0000250"/>
    <property type="project" value="UniProtKB"/>
</dbReference>
<dbReference type="GO" id="GO:0003735">
    <property type="term" value="F:structural constituent of ribosome"/>
    <property type="evidence" value="ECO:0000250"/>
    <property type="project" value="UniProtKB"/>
</dbReference>
<dbReference type="GO" id="GO:0006412">
    <property type="term" value="P:translation"/>
    <property type="evidence" value="ECO:0000250"/>
    <property type="project" value="UniProtKB"/>
</dbReference>
<dbReference type="CDD" id="cd05797">
    <property type="entry name" value="Ribosomal_L10"/>
    <property type="match status" value="1"/>
</dbReference>
<dbReference type="FunFam" id="3.30.70.1730:FF:000006">
    <property type="entry name" value="39S ribosomal protein L10, mitochondrial"/>
    <property type="match status" value="1"/>
</dbReference>
<dbReference type="Gene3D" id="3.30.70.1730">
    <property type="match status" value="1"/>
</dbReference>
<dbReference type="InterPro" id="IPR043141">
    <property type="entry name" value="Ribosomal_uL10-like_sf"/>
</dbReference>
<dbReference type="InterPro" id="IPR047865">
    <property type="entry name" value="Ribosomal_uL10_bac_type"/>
</dbReference>
<dbReference type="PANTHER" id="PTHR11560">
    <property type="entry name" value="39S RIBOSOMAL PROTEIN L10, MITOCHONDRIAL"/>
    <property type="match status" value="1"/>
</dbReference>
<dbReference type="SUPFAM" id="SSF160369">
    <property type="entry name" value="Ribosomal protein L10-like"/>
    <property type="match status" value="1"/>
</dbReference>
<protein>
    <recommendedName>
        <fullName evidence="4">Large ribosomal subunit protein uL10m</fullName>
    </recommendedName>
    <alternativeName>
        <fullName>39S ribosomal protein L10, mitochondrial</fullName>
        <shortName>L10mt</shortName>
        <shortName>MRP-L10</shortName>
    </alternativeName>
    <alternativeName>
        <fullName>MRP-L8</fullName>
    </alternativeName>
</protein>
<keyword id="KW-0903">Direct protein sequencing</keyword>
<keyword id="KW-0496">Mitochondrion</keyword>
<keyword id="KW-1185">Reference proteome</keyword>
<keyword id="KW-0687">Ribonucleoprotein</keyword>
<keyword id="KW-0689">Ribosomal protein</keyword>
<keyword id="KW-0809">Transit peptide</keyword>
<proteinExistence type="evidence at protein level"/>
<accession>P0C2C4</accession>